<protein>
    <recommendedName>
        <fullName evidence="1">UPF0213 protein YhbQ</fullName>
    </recommendedName>
</protein>
<proteinExistence type="inferred from homology"/>
<name>YHBQ_SHIF8</name>
<comment type="similarity">
    <text evidence="1">Belongs to the UPF0213 family.</text>
</comment>
<comment type="sequence caution" evidence="2">
    <conflict type="erroneous initiation">
        <sequence resource="EMBL-CDS" id="ABF05239"/>
    </conflict>
</comment>
<evidence type="ECO:0000255" key="1">
    <source>
        <dbReference type="HAMAP-Rule" id="MF_01029"/>
    </source>
</evidence>
<evidence type="ECO:0000305" key="2"/>
<gene>
    <name evidence="1" type="primary">yhbQ</name>
    <name type="ordered locus">SFV_3185</name>
</gene>
<accession>Q0T0C6</accession>
<dbReference type="EMBL" id="CP000266">
    <property type="protein sequence ID" value="ABF05239.1"/>
    <property type="status" value="ALT_INIT"/>
    <property type="molecule type" value="Genomic_DNA"/>
</dbReference>
<dbReference type="RefSeq" id="WP_000189314.1">
    <property type="nucleotide sequence ID" value="NC_008258.1"/>
</dbReference>
<dbReference type="SMR" id="Q0T0C6"/>
<dbReference type="GeneID" id="93778829"/>
<dbReference type="KEGG" id="sfv:SFV_3185"/>
<dbReference type="HOGENOM" id="CLU_135650_0_1_6"/>
<dbReference type="Proteomes" id="UP000000659">
    <property type="component" value="Chromosome"/>
</dbReference>
<dbReference type="CDD" id="cd10456">
    <property type="entry name" value="GIY-YIG_UPF0213"/>
    <property type="match status" value="1"/>
</dbReference>
<dbReference type="FunFam" id="3.40.1440.10:FF:000002">
    <property type="entry name" value="UPF0213 protein YhbQ"/>
    <property type="match status" value="1"/>
</dbReference>
<dbReference type="Gene3D" id="3.40.1440.10">
    <property type="entry name" value="GIY-YIG endonuclease"/>
    <property type="match status" value="1"/>
</dbReference>
<dbReference type="HAMAP" id="MF_01029">
    <property type="entry name" value="UPF0213"/>
    <property type="match status" value="1"/>
</dbReference>
<dbReference type="InterPro" id="IPR000305">
    <property type="entry name" value="GIY-YIG_endonuc"/>
</dbReference>
<dbReference type="InterPro" id="IPR035901">
    <property type="entry name" value="GIY-YIG_endonuc_sf"/>
</dbReference>
<dbReference type="InterPro" id="IPR050190">
    <property type="entry name" value="UPF0213_domain"/>
</dbReference>
<dbReference type="InterPro" id="IPR022992">
    <property type="entry name" value="UPF0213_GIY-YIG_endonuc"/>
</dbReference>
<dbReference type="PANTHER" id="PTHR34477">
    <property type="entry name" value="UPF0213 PROTEIN YHBQ"/>
    <property type="match status" value="1"/>
</dbReference>
<dbReference type="PANTHER" id="PTHR34477:SF1">
    <property type="entry name" value="UPF0213 PROTEIN YHBQ"/>
    <property type="match status" value="1"/>
</dbReference>
<dbReference type="Pfam" id="PF01541">
    <property type="entry name" value="GIY-YIG"/>
    <property type="match status" value="1"/>
</dbReference>
<dbReference type="SMART" id="SM00465">
    <property type="entry name" value="GIYc"/>
    <property type="match status" value="1"/>
</dbReference>
<dbReference type="SUPFAM" id="SSF82771">
    <property type="entry name" value="GIY-YIG endonuclease"/>
    <property type="match status" value="1"/>
</dbReference>
<dbReference type="PROSITE" id="PS50164">
    <property type="entry name" value="GIY_YIG"/>
    <property type="match status" value="1"/>
</dbReference>
<sequence>MTPWFLYLIRTADNKLYTGITTDVERRYQQHQSGKGAKALRGKGELTLAFSAPVGDRSLALRAEYRVKQLTKRQKERLVAEGAGFAELLSSLQTPEIKSD</sequence>
<reference key="1">
    <citation type="journal article" date="2006" name="BMC Genomics">
        <title>Complete genome sequence of Shigella flexneri 5b and comparison with Shigella flexneri 2a.</title>
        <authorList>
            <person name="Nie H."/>
            <person name="Yang F."/>
            <person name="Zhang X."/>
            <person name="Yang J."/>
            <person name="Chen L."/>
            <person name="Wang J."/>
            <person name="Xiong Z."/>
            <person name="Peng J."/>
            <person name="Sun L."/>
            <person name="Dong J."/>
            <person name="Xue Y."/>
            <person name="Xu X."/>
            <person name="Chen S."/>
            <person name="Yao Z."/>
            <person name="Shen Y."/>
            <person name="Jin Q."/>
        </authorList>
    </citation>
    <scope>NUCLEOTIDE SEQUENCE [LARGE SCALE GENOMIC DNA]</scope>
    <source>
        <strain>8401</strain>
    </source>
</reference>
<feature type="chain" id="PRO_0000328916" description="UPF0213 protein YhbQ">
    <location>
        <begin position="1"/>
        <end position="100"/>
    </location>
</feature>
<feature type="domain" description="GIY-YIG" evidence="1">
    <location>
        <begin position="2"/>
        <end position="77"/>
    </location>
</feature>
<organism>
    <name type="scientific">Shigella flexneri serotype 5b (strain 8401)</name>
    <dbReference type="NCBI Taxonomy" id="373384"/>
    <lineage>
        <taxon>Bacteria</taxon>
        <taxon>Pseudomonadati</taxon>
        <taxon>Pseudomonadota</taxon>
        <taxon>Gammaproteobacteria</taxon>
        <taxon>Enterobacterales</taxon>
        <taxon>Enterobacteriaceae</taxon>
        <taxon>Shigella</taxon>
    </lineage>
</organism>